<gene>
    <name type="primary">fixB</name>
    <name type="synonym">yaaR</name>
    <name type="ordered locus">b0042</name>
    <name type="ordered locus">JW0041</name>
</gene>
<comment type="function">
    <text evidence="2">Required for anaerobic carnitine reduction. May bring reductant to CaiA.</text>
</comment>
<comment type="pathway">
    <text>Amine and polyamine metabolism; carnitine metabolism.</text>
</comment>
<comment type="subunit">
    <text evidence="3">Heterodimer of FixA and FixB.</text>
</comment>
<comment type="interaction">
    <interactant intactId="EBI-554030">
        <id>P31574</id>
    </interactant>
    <interactant intactId="EBI-557080">
        <id>P0AES0</id>
        <label>gss</label>
    </interactant>
    <organismsDiffer>false</organismsDiffer>
    <experiments>2</experiments>
</comment>
<comment type="interaction">
    <interactant intactId="EBI-554030">
        <id>P31574</id>
    </interactant>
    <interactant intactId="EBI-542934">
        <id>P06993</id>
        <label>malT</label>
    </interactant>
    <organismsDiffer>false</organismsDiffer>
    <experiments>3</experiments>
</comment>
<comment type="similarity">
    <text evidence="3">Belongs to the ETF alpha-subunit/FixB family.</text>
</comment>
<feature type="chain" id="PRO_0000167861" description="Protein FixB">
    <location>
        <begin position="1"/>
        <end position="313"/>
    </location>
</feature>
<feature type="binding site" evidence="1">
    <location>
        <begin position="255"/>
        <end position="283"/>
    </location>
    <ligand>
        <name>FAD</name>
        <dbReference type="ChEBI" id="CHEBI:57692"/>
    </ligand>
</feature>
<protein>
    <recommendedName>
        <fullName>Protein FixB</fullName>
    </recommendedName>
</protein>
<reference key="1">
    <citation type="journal article" date="1995" name="J. Basic Microbiol.">
        <title>The fix Escherichia coli region contains four genes related to carnitine metabolism.</title>
        <authorList>
            <person name="Eichler K."/>
            <person name="Buchet A."/>
            <person name="Bourgis F."/>
            <person name="Kleber H.-P."/>
            <person name="Mandrand-Berthelot M.-A."/>
        </authorList>
    </citation>
    <scope>NUCLEOTIDE SEQUENCE [GENOMIC DNA]</scope>
    <source>
        <strain>O44:K74</strain>
    </source>
</reference>
<reference key="2">
    <citation type="journal article" date="1992" name="Nucleic Acids Res.">
        <title>Systematic sequencing of the Escherichia coli genome: analysis of the 0-2.4 min region.</title>
        <authorList>
            <person name="Yura T."/>
            <person name="Mori H."/>
            <person name="Nagai H."/>
            <person name="Nagata T."/>
            <person name="Ishihama A."/>
            <person name="Fujita N."/>
            <person name="Isono K."/>
            <person name="Mizobuchi K."/>
            <person name="Nakata A."/>
        </authorList>
    </citation>
    <scope>NUCLEOTIDE SEQUENCE [LARGE SCALE GENOMIC DNA]</scope>
    <source>
        <strain>K12</strain>
    </source>
</reference>
<reference key="3">
    <citation type="journal article" date="1997" name="Science">
        <title>The complete genome sequence of Escherichia coli K-12.</title>
        <authorList>
            <person name="Blattner F.R."/>
            <person name="Plunkett G. III"/>
            <person name="Bloch C.A."/>
            <person name="Perna N.T."/>
            <person name="Burland V."/>
            <person name="Riley M."/>
            <person name="Collado-Vides J."/>
            <person name="Glasner J.D."/>
            <person name="Rode C.K."/>
            <person name="Mayhew G.F."/>
            <person name="Gregor J."/>
            <person name="Davis N.W."/>
            <person name="Kirkpatrick H.A."/>
            <person name="Goeden M.A."/>
            <person name="Rose D.J."/>
            <person name="Mau B."/>
            <person name="Shao Y."/>
        </authorList>
    </citation>
    <scope>NUCLEOTIDE SEQUENCE [LARGE SCALE GENOMIC DNA]</scope>
    <source>
        <strain>K12 / MG1655 / ATCC 47076</strain>
    </source>
</reference>
<reference key="4">
    <citation type="journal article" date="2006" name="Mol. Syst. Biol.">
        <title>Highly accurate genome sequences of Escherichia coli K-12 strains MG1655 and W3110.</title>
        <authorList>
            <person name="Hayashi K."/>
            <person name="Morooka N."/>
            <person name="Yamamoto Y."/>
            <person name="Fujita K."/>
            <person name="Isono K."/>
            <person name="Choi S."/>
            <person name="Ohtsubo E."/>
            <person name="Baba T."/>
            <person name="Wanner B.L."/>
            <person name="Mori H."/>
            <person name="Horiuchi T."/>
        </authorList>
    </citation>
    <scope>NUCLEOTIDE SEQUENCE [LARGE SCALE GENOMIC DNA]</scope>
    <source>
        <strain>K12 / W3110 / ATCC 27325 / DSM 5911</strain>
    </source>
</reference>
<reference key="5">
    <citation type="journal article" date="2002" name="J. Bacteriol.">
        <title>The fixA and fixB genes are necessary for anaerobic carnitine reduction in Escherichia coli.</title>
        <authorList>
            <person name="Walt A."/>
            <person name="Kahn M.L."/>
        </authorList>
    </citation>
    <scope>FUNCTION</scope>
    <source>
        <strain>K12 / BW25113</strain>
    </source>
</reference>
<organism>
    <name type="scientific">Escherichia coli (strain K12)</name>
    <dbReference type="NCBI Taxonomy" id="83333"/>
    <lineage>
        <taxon>Bacteria</taxon>
        <taxon>Pseudomonadati</taxon>
        <taxon>Pseudomonadota</taxon>
        <taxon>Gammaproteobacteria</taxon>
        <taxon>Enterobacterales</taxon>
        <taxon>Enterobacteriaceae</taxon>
        <taxon>Escherichia</taxon>
    </lineage>
</organism>
<keyword id="KW-0249">Electron transport</keyword>
<keyword id="KW-0274">FAD</keyword>
<keyword id="KW-0285">Flavoprotein</keyword>
<keyword id="KW-1185">Reference proteome</keyword>
<keyword id="KW-0813">Transport</keyword>
<dbReference type="EMBL" id="X71977">
    <property type="protein sequence ID" value="CAA50798.1"/>
    <property type="molecule type" value="Genomic_DNA"/>
</dbReference>
<dbReference type="EMBL" id="U00096">
    <property type="protein sequence ID" value="AAC73153.1"/>
    <property type="molecule type" value="Genomic_DNA"/>
</dbReference>
<dbReference type="EMBL" id="AP009048">
    <property type="protein sequence ID" value="BAE76037.1"/>
    <property type="molecule type" value="Genomic_DNA"/>
</dbReference>
<dbReference type="PIR" id="B64725">
    <property type="entry name" value="B64725"/>
</dbReference>
<dbReference type="RefSeq" id="NP_414584.1">
    <property type="nucleotide sequence ID" value="NC_000913.3"/>
</dbReference>
<dbReference type="RefSeq" id="WP_001091499.1">
    <property type="nucleotide sequence ID" value="NZ_STEB01000010.1"/>
</dbReference>
<dbReference type="SMR" id="P31574"/>
<dbReference type="BioGRID" id="4262208">
    <property type="interactions" value="13"/>
</dbReference>
<dbReference type="BioGRID" id="853208">
    <property type="interactions" value="4"/>
</dbReference>
<dbReference type="DIP" id="DIP-9621N"/>
<dbReference type="FunCoup" id="P31574">
    <property type="interactions" value="713"/>
</dbReference>
<dbReference type="IntAct" id="P31574">
    <property type="interactions" value="12"/>
</dbReference>
<dbReference type="STRING" id="511145.b0042"/>
<dbReference type="PaxDb" id="511145-b0042"/>
<dbReference type="EnsemblBacteria" id="AAC73153">
    <property type="protein sequence ID" value="AAC73153"/>
    <property type="gene ID" value="b0042"/>
</dbReference>
<dbReference type="GeneID" id="948939"/>
<dbReference type="KEGG" id="ecj:JW0041"/>
<dbReference type="KEGG" id="eco:b0042"/>
<dbReference type="KEGG" id="ecoc:C3026_00220"/>
<dbReference type="PATRIC" id="fig|1411691.4.peg.2241"/>
<dbReference type="EchoBASE" id="EB1524"/>
<dbReference type="eggNOG" id="COG2025">
    <property type="taxonomic scope" value="Bacteria"/>
</dbReference>
<dbReference type="HOGENOM" id="CLU_034178_0_1_6"/>
<dbReference type="InParanoid" id="P31574"/>
<dbReference type="OMA" id="RYVFGNK"/>
<dbReference type="OrthoDB" id="9770286at2"/>
<dbReference type="PhylomeDB" id="P31574"/>
<dbReference type="BioCyc" id="EcoCyc:EG11563-MONOMER"/>
<dbReference type="UniPathway" id="UPA00117"/>
<dbReference type="PRO" id="PR:P31574"/>
<dbReference type="Proteomes" id="UP000000625">
    <property type="component" value="Chromosome"/>
</dbReference>
<dbReference type="GO" id="GO:0009055">
    <property type="term" value="F:electron transfer activity"/>
    <property type="evidence" value="ECO:0000318"/>
    <property type="project" value="GO_Central"/>
</dbReference>
<dbReference type="GO" id="GO:0050660">
    <property type="term" value="F:flavin adenine dinucleotide binding"/>
    <property type="evidence" value="ECO:0000318"/>
    <property type="project" value="GO_Central"/>
</dbReference>
<dbReference type="GO" id="GO:0042413">
    <property type="term" value="P:carnitine catabolic process"/>
    <property type="evidence" value="ECO:0000315"/>
    <property type="project" value="EcoCyc"/>
</dbReference>
<dbReference type="GO" id="GO:0009437">
    <property type="term" value="P:carnitine metabolic process"/>
    <property type="evidence" value="ECO:0000315"/>
    <property type="project" value="EcoliWiki"/>
</dbReference>
<dbReference type="GO" id="GO:0033539">
    <property type="term" value="P:fatty acid beta-oxidation using acyl-CoA dehydrogenase"/>
    <property type="evidence" value="ECO:0000318"/>
    <property type="project" value="GO_Central"/>
</dbReference>
<dbReference type="FunFam" id="3.40.50.1220:FF:000004">
    <property type="entry name" value="Electron transfer flavoprotein"/>
    <property type="match status" value="1"/>
</dbReference>
<dbReference type="FunFam" id="3.40.50.620:FF:000067">
    <property type="entry name" value="Protein FixB"/>
    <property type="match status" value="1"/>
</dbReference>
<dbReference type="Gene3D" id="3.40.50.620">
    <property type="entry name" value="HUPs"/>
    <property type="match status" value="1"/>
</dbReference>
<dbReference type="Gene3D" id="3.40.50.1220">
    <property type="entry name" value="TPP-binding domain"/>
    <property type="match status" value="1"/>
</dbReference>
<dbReference type="HAMAP" id="MF_01056">
    <property type="entry name" value="FixB"/>
    <property type="match status" value="1"/>
</dbReference>
<dbReference type="InterPro" id="IPR029035">
    <property type="entry name" value="DHS-like_NAD/FAD-binding_dom"/>
</dbReference>
<dbReference type="InterPro" id="IPR014730">
    <property type="entry name" value="ETF_a/b_N"/>
</dbReference>
<dbReference type="InterPro" id="IPR001308">
    <property type="entry name" value="ETF_a/FixB"/>
</dbReference>
<dbReference type="InterPro" id="IPR014731">
    <property type="entry name" value="ETF_asu_C"/>
</dbReference>
<dbReference type="InterPro" id="IPR018206">
    <property type="entry name" value="ETF_asu_C_CS"/>
</dbReference>
<dbReference type="InterPro" id="IPR023461">
    <property type="entry name" value="FixB"/>
</dbReference>
<dbReference type="InterPro" id="IPR014729">
    <property type="entry name" value="Rossmann-like_a/b/a_fold"/>
</dbReference>
<dbReference type="NCBIfam" id="NF002889">
    <property type="entry name" value="PRK03363.1"/>
    <property type="match status" value="1"/>
</dbReference>
<dbReference type="PANTHER" id="PTHR43153">
    <property type="entry name" value="ELECTRON TRANSFER FLAVOPROTEIN ALPHA"/>
    <property type="match status" value="1"/>
</dbReference>
<dbReference type="PANTHER" id="PTHR43153:SF5">
    <property type="entry name" value="PROTEIN FIXB-RELATED"/>
    <property type="match status" value="1"/>
</dbReference>
<dbReference type="Pfam" id="PF01012">
    <property type="entry name" value="ETF"/>
    <property type="match status" value="1"/>
</dbReference>
<dbReference type="Pfam" id="PF00766">
    <property type="entry name" value="ETF_alpha"/>
    <property type="match status" value="1"/>
</dbReference>
<dbReference type="PIRSF" id="PIRSF000089">
    <property type="entry name" value="Electra_flavoP_a"/>
    <property type="match status" value="1"/>
</dbReference>
<dbReference type="SMART" id="SM00893">
    <property type="entry name" value="ETF"/>
    <property type="match status" value="1"/>
</dbReference>
<dbReference type="SUPFAM" id="SSF52402">
    <property type="entry name" value="Adenine nucleotide alpha hydrolases-like"/>
    <property type="match status" value="1"/>
</dbReference>
<dbReference type="SUPFAM" id="SSF52467">
    <property type="entry name" value="DHS-like NAD/FAD-binding domain"/>
    <property type="match status" value="1"/>
</dbReference>
<dbReference type="PROSITE" id="PS00696">
    <property type="entry name" value="ETF_ALPHA"/>
    <property type="match status" value="1"/>
</dbReference>
<accession>P31574</accession>
<accession>Q2MCG9</accession>
<proteinExistence type="evidence at protein level"/>
<sequence length="313" mass="33513">MNTFSQVWVFSDTPSRLPELMNGAQALANQINTFVLNDADGAQAIQLGANHVWKLNGKPDDRMIEDYAGVMADTIRQHGADGLVLLPNTRRGKLLAAKLGYRLKAAVSNDASTVSVQDGKATVKHMVYGGLAIGEERIATPYAVLTISSGTFDAAQPDASRTGETHTVEWQAPAVAITRTATQARQSNSVDLDKARLVVSVGRGIGSKENIALAEQLCKAIGAELACSRPVAENEKWMEHERYVGISNLMLKPELYLAVGISGQIQHMVGANASQTIFAINKDKNAPIFQYADYGIVGDAVKILPALTAALAR</sequence>
<name>FIXB_ECOLI</name>
<evidence type="ECO:0000255" key="1"/>
<evidence type="ECO:0000269" key="2">
    <source>
    </source>
</evidence>
<evidence type="ECO:0000305" key="3"/>